<dbReference type="EMBL" id="CP000969">
    <property type="protein sequence ID" value="ACB09612.1"/>
    <property type="molecule type" value="Genomic_DNA"/>
</dbReference>
<dbReference type="RefSeq" id="WP_004082052.1">
    <property type="nucleotide sequence ID" value="NC_010483.1"/>
</dbReference>
<dbReference type="SMR" id="B1LBB4"/>
<dbReference type="DNASU" id="6092709"/>
<dbReference type="KEGG" id="trq:TRQ2_1268"/>
<dbReference type="HOGENOM" id="CLU_047155_1_1_0"/>
<dbReference type="Proteomes" id="UP000001687">
    <property type="component" value="Chromosome"/>
</dbReference>
<dbReference type="GO" id="GO:0005737">
    <property type="term" value="C:cytoplasm"/>
    <property type="evidence" value="ECO:0007669"/>
    <property type="project" value="UniProtKB-SubCell"/>
</dbReference>
<dbReference type="GO" id="GO:0003746">
    <property type="term" value="F:translation elongation factor activity"/>
    <property type="evidence" value="ECO:0007669"/>
    <property type="project" value="UniProtKB-UniRule"/>
</dbReference>
<dbReference type="CDD" id="cd14275">
    <property type="entry name" value="UBA_EF-Ts"/>
    <property type="match status" value="1"/>
</dbReference>
<dbReference type="FunFam" id="1.10.286.20:FF:000001">
    <property type="entry name" value="Elongation factor Ts"/>
    <property type="match status" value="1"/>
</dbReference>
<dbReference type="FunFam" id="1.10.8.10:FF:000001">
    <property type="entry name" value="Elongation factor Ts"/>
    <property type="match status" value="1"/>
</dbReference>
<dbReference type="Gene3D" id="1.10.286.20">
    <property type="match status" value="1"/>
</dbReference>
<dbReference type="Gene3D" id="1.10.8.10">
    <property type="entry name" value="DNA helicase RuvA subunit, C-terminal domain"/>
    <property type="match status" value="1"/>
</dbReference>
<dbReference type="Gene3D" id="3.30.479.20">
    <property type="entry name" value="Elongation factor Ts, dimerisation domain"/>
    <property type="match status" value="1"/>
</dbReference>
<dbReference type="HAMAP" id="MF_00050">
    <property type="entry name" value="EF_Ts"/>
    <property type="match status" value="1"/>
</dbReference>
<dbReference type="InterPro" id="IPR036402">
    <property type="entry name" value="EF-Ts_dimer_sf"/>
</dbReference>
<dbReference type="InterPro" id="IPR001816">
    <property type="entry name" value="Transl_elong_EFTs/EF1B"/>
</dbReference>
<dbReference type="InterPro" id="IPR014039">
    <property type="entry name" value="Transl_elong_EFTs/EF1B_dimer"/>
</dbReference>
<dbReference type="InterPro" id="IPR018101">
    <property type="entry name" value="Transl_elong_Ts_CS"/>
</dbReference>
<dbReference type="InterPro" id="IPR009060">
    <property type="entry name" value="UBA-like_sf"/>
</dbReference>
<dbReference type="NCBIfam" id="TIGR00116">
    <property type="entry name" value="tsf"/>
    <property type="match status" value="1"/>
</dbReference>
<dbReference type="PANTHER" id="PTHR11741">
    <property type="entry name" value="ELONGATION FACTOR TS"/>
    <property type="match status" value="1"/>
</dbReference>
<dbReference type="PANTHER" id="PTHR11741:SF0">
    <property type="entry name" value="ELONGATION FACTOR TS, MITOCHONDRIAL"/>
    <property type="match status" value="1"/>
</dbReference>
<dbReference type="Pfam" id="PF00889">
    <property type="entry name" value="EF_TS"/>
    <property type="match status" value="1"/>
</dbReference>
<dbReference type="SUPFAM" id="SSF54713">
    <property type="entry name" value="Elongation factor Ts (EF-Ts), dimerisation domain"/>
    <property type="match status" value="1"/>
</dbReference>
<dbReference type="SUPFAM" id="SSF46934">
    <property type="entry name" value="UBA-like"/>
    <property type="match status" value="1"/>
</dbReference>
<dbReference type="PROSITE" id="PS01126">
    <property type="entry name" value="EF_TS_1"/>
    <property type="match status" value="1"/>
</dbReference>
<dbReference type="PROSITE" id="PS01127">
    <property type="entry name" value="EF_TS_2"/>
    <property type="match status" value="1"/>
</dbReference>
<sequence>MEISMDLIKKLREMTGAGILDCKKALEEANGDMEKAVEILRKKGAATAEKKAGRTTKEGIIVAYVHFNGRIGVLLEMNCETDFVARTDEFKELAYNLAKQVAAMKPLYVRREDVPAEVIEKEKEIYRAQIKDKPENIVEKIVEGKLEKFFEQACLYEQTYIFDDTKKVKDLINELIAKTGENIRVSRFTRYEIGEGYED</sequence>
<protein>
    <recommendedName>
        <fullName evidence="1">Elongation factor Ts</fullName>
        <shortName evidence="1">EF-Ts</shortName>
    </recommendedName>
</protein>
<gene>
    <name evidence="1" type="primary">tsf</name>
    <name type="ordered locus">TRQ2_1268</name>
</gene>
<keyword id="KW-0963">Cytoplasm</keyword>
<keyword id="KW-0251">Elongation factor</keyword>
<keyword id="KW-0648">Protein biosynthesis</keyword>
<feature type="chain" id="PRO_1000189896" description="Elongation factor Ts">
    <location>
        <begin position="1"/>
        <end position="199"/>
    </location>
</feature>
<feature type="region of interest" description="Involved in Mg(2+) ion dislocation from EF-Tu" evidence="1">
    <location>
        <begin position="81"/>
        <end position="84"/>
    </location>
</feature>
<comment type="function">
    <text evidence="1">Associates with the EF-Tu.GDP complex and induces the exchange of GDP to GTP. It remains bound to the aminoacyl-tRNA.EF-Tu.GTP complex up to the GTP hydrolysis stage on the ribosome.</text>
</comment>
<comment type="subcellular location">
    <subcellularLocation>
        <location evidence="1">Cytoplasm</location>
    </subcellularLocation>
</comment>
<comment type="similarity">
    <text evidence="1">Belongs to the EF-Ts family.</text>
</comment>
<name>EFTS_THESQ</name>
<reference key="1">
    <citation type="journal article" date="2011" name="J. Bacteriol.">
        <title>Genome sequence of Thermotoga sp. strain RQ2, a hyperthermophilic bacterium isolated from a geothermally heated region of the seafloor near Ribeira Quente, the Azores.</title>
        <authorList>
            <person name="Swithers K.S."/>
            <person name="DiPippo J.L."/>
            <person name="Bruce D.C."/>
            <person name="Detter C."/>
            <person name="Tapia R."/>
            <person name="Han S."/>
            <person name="Saunders E."/>
            <person name="Goodwin L.A."/>
            <person name="Han J."/>
            <person name="Woyke T."/>
            <person name="Pitluck S."/>
            <person name="Pennacchio L."/>
            <person name="Nolan M."/>
            <person name="Mikhailova N."/>
            <person name="Lykidis A."/>
            <person name="Land M.L."/>
            <person name="Brettin T."/>
            <person name="Stetter K.O."/>
            <person name="Nelson K.E."/>
            <person name="Gogarten J.P."/>
            <person name="Noll K.M."/>
        </authorList>
    </citation>
    <scope>NUCLEOTIDE SEQUENCE [LARGE SCALE GENOMIC DNA]</scope>
    <source>
        <strain>RQ2</strain>
    </source>
</reference>
<proteinExistence type="inferred from homology"/>
<evidence type="ECO:0000255" key="1">
    <source>
        <dbReference type="HAMAP-Rule" id="MF_00050"/>
    </source>
</evidence>
<organism>
    <name type="scientific">Thermotoga sp. (strain RQ2)</name>
    <dbReference type="NCBI Taxonomy" id="126740"/>
    <lineage>
        <taxon>Bacteria</taxon>
        <taxon>Thermotogati</taxon>
        <taxon>Thermotogota</taxon>
        <taxon>Thermotogae</taxon>
        <taxon>Thermotogales</taxon>
        <taxon>Thermotogaceae</taxon>
        <taxon>Thermotoga</taxon>
    </lineage>
</organism>
<accession>B1LBB4</accession>